<protein>
    <recommendedName>
        <fullName>Acetylcholinesterase</fullName>
        <shortName>AChE</shortName>
        <ecNumber>3.1.1.7</ecNumber>
    </recommendedName>
</protein>
<name>ACES_NAJOX</name>
<dbReference type="EC" id="3.1.1.7"/>
<dbReference type="PIR" id="A39022">
    <property type="entry name" value="A39022"/>
</dbReference>
<dbReference type="PIR" id="A41117">
    <property type="entry name" value="A41117"/>
</dbReference>
<dbReference type="GO" id="GO:0005615">
    <property type="term" value="C:extracellular space"/>
    <property type="evidence" value="ECO:0007669"/>
    <property type="project" value="TreeGrafter"/>
</dbReference>
<dbReference type="GO" id="GO:0005886">
    <property type="term" value="C:plasma membrane"/>
    <property type="evidence" value="ECO:0007669"/>
    <property type="project" value="UniProtKB-SubCell"/>
</dbReference>
<dbReference type="GO" id="GO:0045202">
    <property type="term" value="C:synapse"/>
    <property type="evidence" value="ECO:0007669"/>
    <property type="project" value="UniProtKB-SubCell"/>
</dbReference>
<dbReference type="GO" id="GO:0003990">
    <property type="term" value="F:acetylcholinesterase activity"/>
    <property type="evidence" value="ECO:0007669"/>
    <property type="project" value="UniProtKB-EC"/>
</dbReference>
<dbReference type="GO" id="GO:0090729">
    <property type="term" value="F:toxin activity"/>
    <property type="evidence" value="ECO:0007669"/>
    <property type="project" value="UniProtKB-KW"/>
</dbReference>
<dbReference type="GO" id="GO:0006581">
    <property type="term" value="P:acetylcholine catabolic process"/>
    <property type="evidence" value="ECO:0007669"/>
    <property type="project" value="TreeGrafter"/>
</dbReference>
<dbReference type="GO" id="GO:0019695">
    <property type="term" value="P:choline metabolic process"/>
    <property type="evidence" value="ECO:0007669"/>
    <property type="project" value="TreeGrafter"/>
</dbReference>
<dbReference type="Gene3D" id="3.40.50.1820">
    <property type="entry name" value="alpha/beta hydrolase"/>
    <property type="match status" value="1"/>
</dbReference>
<dbReference type="InterPro" id="IPR029058">
    <property type="entry name" value="AB_hydrolase_fold"/>
</dbReference>
<dbReference type="InterPro" id="IPR050654">
    <property type="entry name" value="AChE-related_enzymes"/>
</dbReference>
<dbReference type="InterPro" id="IPR002018">
    <property type="entry name" value="CarbesteraseB"/>
</dbReference>
<dbReference type="PANTHER" id="PTHR43918">
    <property type="entry name" value="ACETYLCHOLINESTERASE"/>
    <property type="match status" value="1"/>
</dbReference>
<dbReference type="PANTHER" id="PTHR43918:SF11">
    <property type="entry name" value="ACETYLCHOLINESTERASE"/>
    <property type="match status" value="1"/>
</dbReference>
<dbReference type="Pfam" id="PF00135">
    <property type="entry name" value="COesterase"/>
    <property type="match status" value="1"/>
</dbReference>
<dbReference type="SUPFAM" id="SSF53474">
    <property type="entry name" value="alpha/beta-Hydrolases"/>
    <property type="match status" value="1"/>
</dbReference>
<comment type="function">
    <text>In venom, its toxic role is unclear: it could result in less musculatory control by rapidly hydrolyzing acetylcholine, or that it works synergistically with alkaline phosphatase (ALP) in paralyzing prey through hypotension. In muscle, it terminates signal transduction at the neuromuscular junction by rapid hydrolysis of the acetylcholine released into the synaptic cleft. In liver, its function is unclear: it could serve as a safeguard against any diffusion of acetylcholine from synapses into the circulation.</text>
</comment>
<comment type="catalytic activity">
    <reaction evidence="2">
        <text>acetylcholine + H2O = choline + acetate + H(+)</text>
        <dbReference type="Rhea" id="RHEA:17561"/>
        <dbReference type="ChEBI" id="CHEBI:15354"/>
        <dbReference type="ChEBI" id="CHEBI:15355"/>
        <dbReference type="ChEBI" id="CHEBI:15377"/>
        <dbReference type="ChEBI" id="CHEBI:15378"/>
        <dbReference type="ChEBI" id="CHEBI:30089"/>
        <dbReference type="EC" id="3.1.1.7"/>
    </reaction>
</comment>
<comment type="subcellular location">
    <subcellularLocation>
        <location>Synapse</location>
    </subcellularLocation>
    <subcellularLocation>
        <location>Secreted</location>
    </subcellularLocation>
    <subcellularLocation>
        <location evidence="1">Cell membrane</location>
        <topology evidence="1">Peripheral membrane protein</topology>
    </subcellularLocation>
</comment>
<comment type="tissue specificity">
    <text>Expressed by the venom gland. Is also probably expressed by liver and muscle.</text>
</comment>
<comment type="PTM">
    <text evidence="1">The N-terminus is blocked.</text>
</comment>
<comment type="similarity">
    <text evidence="5">Belongs to the type-B carboxylesterase/lipase family.</text>
</comment>
<evidence type="ECO:0000250" key="1"/>
<evidence type="ECO:0000250" key="2">
    <source>
        <dbReference type="UniProtKB" id="Q92035"/>
    </source>
</evidence>
<evidence type="ECO:0000255" key="3">
    <source>
        <dbReference type="PROSITE-ProRule" id="PRU10039"/>
    </source>
</evidence>
<evidence type="ECO:0000256" key="4">
    <source>
        <dbReference type="SAM" id="MobiDB-lite"/>
    </source>
</evidence>
<evidence type="ECO:0000305" key="5"/>
<keyword id="KW-1003">Cell membrane</keyword>
<keyword id="KW-0903">Direct protein sequencing</keyword>
<keyword id="KW-0378">Hydrolase</keyword>
<keyword id="KW-0472">Membrane</keyword>
<keyword id="KW-0531">Neurotransmitter degradation</keyword>
<keyword id="KW-0964">Secreted</keyword>
<keyword id="KW-0719">Serine esterase</keyword>
<keyword id="KW-0770">Synapse</keyword>
<keyword id="KW-0800">Toxin</keyword>
<organism>
    <name type="scientific">Naja oxiana</name>
    <name type="common">Central Asian cobra</name>
    <name type="synonym">Oxus cobra</name>
    <dbReference type="NCBI Taxonomy" id="8657"/>
    <lineage>
        <taxon>Eukaryota</taxon>
        <taxon>Metazoa</taxon>
        <taxon>Chordata</taxon>
        <taxon>Craniata</taxon>
        <taxon>Vertebrata</taxon>
        <taxon>Euteleostomi</taxon>
        <taxon>Lepidosauria</taxon>
        <taxon>Squamata</taxon>
        <taxon>Bifurcata</taxon>
        <taxon>Unidentata</taxon>
        <taxon>Episquamata</taxon>
        <taxon>Toxicofera</taxon>
        <taxon>Serpentes</taxon>
        <taxon>Colubroidea</taxon>
        <taxon>Elapidae</taxon>
        <taxon>Elapinae</taxon>
        <taxon>Naja</taxon>
    </lineage>
</organism>
<accession>Q7LZG1</accession>
<accession>Q7LZ27</accession>
<proteinExistence type="evidence at protein level"/>
<reference key="1">
    <citation type="journal article" date="1990" name="J. Protein Chem.">
        <title>The active site and partial sequence of cobra venom acetylcholinesterase.</title>
        <authorList>
            <person name="Weise C."/>
            <person name="Kreienkamp H.J."/>
            <person name="Raba R."/>
            <person name="Aaviksaar A."/>
            <person name="Hucho F."/>
        </authorList>
    </citation>
    <scope>PROTEIN SEQUENCE OF 1-44 AND 53-181</scope>
    <source>
        <tissue>Venom</tissue>
    </source>
</reference>
<reference key="2">
    <citation type="journal article" date="1991" name="Proc. Natl. Acad. Sci. U.S.A.">
        <title>Anionic subsites of the catalytic center of acetylcholinesterase from Torpedo and from cobra venom.</title>
        <authorList>
            <person name="Kreienkamp H.J."/>
            <person name="Weise C."/>
            <person name="Raba R."/>
            <person name="Aaviksaar A."/>
            <person name="Hucho F."/>
        </authorList>
    </citation>
    <scope>PROTEIN SEQUENCE OF 45-52</scope>
    <source>
        <tissue>Venom</tissue>
    </source>
</reference>
<gene>
    <name type="primary">ACHE</name>
</gene>
<feature type="chain" id="PRO_0000408518" description="Acetylcholinesterase">
    <location>
        <begin position="1" status="less than"/>
        <end position="181" status="greater than"/>
    </location>
</feature>
<feature type="region of interest" description="Disordered" evidence="4">
    <location>
        <begin position="162"/>
        <end position="181"/>
    </location>
</feature>
<feature type="active site" description="Acyl-ester intermediate" evidence="3">
    <location>
        <position position="76"/>
    </location>
</feature>
<feature type="active site" description="Charge relay system" evidence="1">
    <location>
        <position position="132"/>
    </location>
</feature>
<feature type="non-consecutive residues" evidence="5">
    <location>
        <begin position="35"/>
        <end position="36"/>
    </location>
</feature>
<feature type="non-consecutive residues" evidence="5">
    <location>
        <begin position="44"/>
        <end position="45"/>
    </location>
</feature>
<feature type="non-consecutive residues" evidence="5">
    <location>
        <begin position="52"/>
        <end position="53"/>
    </location>
</feature>
<feature type="non-consecutive residues" evidence="5">
    <location>
        <begin position="61"/>
        <end position="62"/>
    </location>
</feature>
<feature type="non-consecutive residues" evidence="5">
    <location>
        <begin position="68"/>
        <end position="69"/>
    </location>
</feature>
<feature type="non-consecutive residues" evidence="5">
    <location>
        <begin position="91"/>
        <end position="92"/>
    </location>
</feature>
<feature type="non-consecutive residues" evidence="5">
    <location>
        <begin position="125"/>
        <end position="126"/>
    </location>
</feature>
<feature type="non-consecutive residues" evidence="5">
    <location>
        <begin position="135"/>
        <end position="136"/>
    </location>
</feature>
<feature type="non-consecutive residues" evidence="5">
    <location>
        <begin position="151"/>
        <end position="152"/>
    </location>
</feature>
<feature type="non-consecutive residues" evidence="5">
    <location>
        <begin position="158"/>
        <end position="159"/>
    </location>
</feature>
<feature type="non-consecutive residues" evidence="5">
    <location>
        <begin position="168"/>
        <end position="169"/>
    </location>
</feature>
<feature type="non-consecutive residues" evidence="5">
    <location>
        <begin position="172"/>
        <end position="173"/>
    </location>
</feature>
<feature type="non-terminal residue">
    <location>
        <position position="1"/>
    </location>
</feature>
<feature type="non-terminal residue">
    <location>
        <position position="181"/>
    </location>
</feature>
<sequence length="181" mass="19255">SELKVATQTGFVRGLSLPVLAGHVSAHLGVPFAEPFLRPEPVKPGAEMWNPNLNIWVPSGRVGAFXFLTVTLFGESAGAASVGMXLLSTQRAILQSGAPNAPWAQVQPAESRFPFVPVIDGEFFPLGVNKDEGSFGVPGFSKXXESLINQAVPHANDIYTDWQDQDNGGLPLTGNPTXPHN</sequence>